<protein>
    <recommendedName>
        <fullName evidence="1">D-alanine--D-alanyl carrier protein ligase</fullName>
        <shortName evidence="1">DCL</shortName>
        <ecNumber evidence="1">6.2.1.54</ecNumber>
    </recommendedName>
    <alternativeName>
        <fullName evidence="1">D-alanine--poly(phosphoribitol) ligase subunit 1</fullName>
    </alternativeName>
    <alternativeName>
        <fullName evidence="1">D-alanine-activating enzyme</fullName>
        <shortName evidence="1">DAE</shortName>
    </alternativeName>
</protein>
<organism>
    <name type="scientific">Staphylococcus aureus (strain Mu3 / ATCC 700698)</name>
    <dbReference type="NCBI Taxonomy" id="418127"/>
    <lineage>
        <taxon>Bacteria</taxon>
        <taxon>Bacillati</taxon>
        <taxon>Bacillota</taxon>
        <taxon>Bacilli</taxon>
        <taxon>Bacillales</taxon>
        <taxon>Staphylococcaceae</taxon>
        <taxon>Staphylococcus</taxon>
    </lineage>
</organism>
<dbReference type="EC" id="6.2.1.54" evidence="1"/>
<dbReference type="EMBL" id="AP009324">
    <property type="protein sequence ID" value="BAF77810.1"/>
    <property type="molecule type" value="Genomic_DNA"/>
</dbReference>
<dbReference type="RefSeq" id="WP_000129659.1">
    <property type="nucleotide sequence ID" value="NC_009782.1"/>
</dbReference>
<dbReference type="SMR" id="A7X0D6"/>
<dbReference type="KEGG" id="saw:SAHV_0927"/>
<dbReference type="HOGENOM" id="CLU_000022_2_12_9"/>
<dbReference type="UniPathway" id="UPA00556"/>
<dbReference type="GO" id="GO:0005737">
    <property type="term" value="C:cytoplasm"/>
    <property type="evidence" value="ECO:0007669"/>
    <property type="project" value="UniProtKB-SubCell"/>
</dbReference>
<dbReference type="GO" id="GO:0005524">
    <property type="term" value="F:ATP binding"/>
    <property type="evidence" value="ECO:0007669"/>
    <property type="project" value="UniProtKB-KW"/>
</dbReference>
<dbReference type="GO" id="GO:0047473">
    <property type="term" value="F:D-alanine [D-alanyl carrier protein] ligase activity"/>
    <property type="evidence" value="ECO:0007669"/>
    <property type="project" value="UniProtKB-UniRule"/>
</dbReference>
<dbReference type="GO" id="GO:0070395">
    <property type="term" value="P:lipoteichoic acid biosynthetic process"/>
    <property type="evidence" value="ECO:0007669"/>
    <property type="project" value="UniProtKB-UniRule"/>
</dbReference>
<dbReference type="GO" id="GO:0141179">
    <property type="term" value="P:symbiont-mediated evasion of recognition by host antimicrobial peptide"/>
    <property type="evidence" value="ECO:0000269"/>
    <property type="project" value="SigSci"/>
</dbReference>
<dbReference type="CDD" id="cd05945">
    <property type="entry name" value="DltA"/>
    <property type="match status" value="1"/>
</dbReference>
<dbReference type="FunFam" id="3.30.300.30:FF:000012">
    <property type="entry name" value="D-alanine--D-alanyl carrier protein ligase"/>
    <property type="match status" value="1"/>
</dbReference>
<dbReference type="Gene3D" id="3.30.300.30">
    <property type="match status" value="1"/>
</dbReference>
<dbReference type="Gene3D" id="3.40.50.12780">
    <property type="entry name" value="N-terminal domain of ligase-like"/>
    <property type="match status" value="1"/>
</dbReference>
<dbReference type="HAMAP" id="MF_00593">
    <property type="entry name" value="DltA"/>
    <property type="match status" value="1"/>
</dbReference>
<dbReference type="InterPro" id="IPR010071">
    <property type="entry name" value="AA_adenyl_dom"/>
</dbReference>
<dbReference type="InterPro" id="IPR025110">
    <property type="entry name" value="AMP-bd_C"/>
</dbReference>
<dbReference type="InterPro" id="IPR045851">
    <property type="entry name" value="AMP-bd_C_sf"/>
</dbReference>
<dbReference type="InterPro" id="IPR000873">
    <property type="entry name" value="AMP-dep_synth/lig_dom"/>
</dbReference>
<dbReference type="InterPro" id="IPR042099">
    <property type="entry name" value="ANL_N_sf"/>
</dbReference>
<dbReference type="InterPro" id="IPR010072">
    <property type="entry name" value="DltA"/>
</dbReference>
<dbReference type="InterPro" id="IPR044507">
    <property type="entry name" value="DltA-like"/>
</dbReference>
<dbReference type="NCBIfam" id="TIGR01733">
    <property type="entry name" value="AA-adenyl-dom"/>
    <property type="match status" value="1"/>
</dbReference>
<dbReference type="NCBIfam" id="TIGR01734">
    <property type="entry name" value="D-ala-DACP-lig"/>
    <property type="match status" value="1"/>
</dbReference>
<dbReference type="NCBIfam" id="NF003417">
    <property type="entry name" value="PRK04813.1"/>
    <property type="match status" value="1"/>
</dbReference>
<dbReference type="PANTHER" id="PTHR45398">
    <property type="match status" value="1"/>
</dbReference>
<dbReference type="PANTHER" id="PTHR45398:SF1">
    <property type="entry name" value="ENZYME, PUTATIVE (JCVI)-RELATED"/>
    <property type="match status" value="1"/>
</dbReference>
<dbReference type="Pfam" id="PF00501">
    <property type="entry name" value="AMP-binding"/>
    <property type="match status" value="1"/>
</dbReference>
<dbReference type="Pfam" id="PF13193">
    <property type="entry name" value="AMP-binding_C"/>
    <property type="match status" value="1"/>
</dbReference>
<dbReference type="SUPFAM" id="SSF56801">
    <property type="entry name" value="Acetyl-CoA synthetase-like"/>
    <property type="match status" value="1"/>
</dbReference>
<keyword id="KW-0067">ATP-binding</keyword>
<keyword id="KW-0963">Cytoplasm</keyword>
<keyword id="KW-0436">Ligase</keyword>
<keyword id="KW-0547">Nucleotide-binding</keyword>
<feature type="chain" id="PRO_1000025532" description="D-alanine--D-alanyl carrier protein ligase">
    <location>
        <begin position="1"/>
        <end position="485"/>
    </location>
</feature>
<feature type="binding site" evidence="1">
    <location>
        <begin position="144"/>
        <end position="145"/>
    </location>
    <ligand>
        <name>ATP</name>
        <dbReference type="ChEBI" id="CHEBI:30616"/>
    </ligand>
</feature>
<feature type="binding site" evidence="1">
    <location>
        <position position="189"/>
    </location>
    <ligand>
        <name>D-alanine</name>
        <dbReference type="ChEBI" id="CHEBI:57416"/>
    </ligand>
</feature>
<feature type="binding site" evidence="1">
    <location>
        <begin position="284"/>
        <end position="289"/>
    </location>
    <ligand>
        <name>ATP</name>
        <dbReference type="ChEBI" id="CHEBI:30616"/>
    </ligand>
</feature>
<feature type="binding site" evidence="1">
    <location>
        <position position="293"/>
    </location>
    <ligand>
        <name>D-alanine</name>
        <dbReference type="ChEBI" id="CHEBI:57416"/>
    </ligand>
</feature>
<feature type="binding site" evidence="1">
    <location>
        <position position="365"/>
    </location>
    <ligand>
        <name>ATP</name>
        <dbReference type="ChEBI" id="CHEBI:30616"/>
    </ligand>
</feature>
<feature type="binding site" evidence="1">
    <location>
        <position position="473"/>
    </location>
    <ligand>
        <name>ATP</name>
        <dbReference type="ChEBI" id="CHEBI:30616"/>
    </ligand>
</feature>
<feature type="binding site" evidence="1">
    <location>
        <position position="473"/>
    </location>
    <ligand>
        <name>D-alanine</name>
        <dbReference type="ChEBI" id="CHEBI:57416"/>
    </ligand>
</feature>
<evidence type="ECO:0000255" key="1">
    <source>
        <dbReference type="HAMAP-Rule" id="MF_00593"/>
    </source>
</evidence>
<sequence length="485" mass="54644">MTDIINKLQAFADANPQSIAVRHTTDELTYQQLMDESSKLAHRLQGSKKPMILFGHMSPYMIVGMIGAIKAGCGYVPVDTSIPEDRIKMIINKVQPEFVFNTTDESFESLEGEVFTIEDIKTSQDPVIFDSQIKDNDTVYTIFTSGSTGEPKGVQIEYASLVQFTEWMLELNKSGNKQQWLNQAPFSFDLSVMAIYPCLASGGTLNLVDKNMINKPKLLNEMLTATPINIWVSTPSFMEMCLLLPTLNEEQYGSLNEFFFCGEILPHRAAKALVSRFPSATIYNTYGPTEATVAVTSIQITQEILDQYPTLPVGVERLGARLSTTDDGELVIEGQSVSLGYLKNDQKTAEVFNFDDGIRTYHTGDKAKFENGQWFIQGRIDFQIKLNGYRMELEEIETQLRQSEFVKEAIVVPVYKNDKVIHLIGAIVPTTEVTDNAEMTKNIKNDLKSRLPEYMIPRKFEWMEQLPLTSNGKIDRKKIAEVING</sequence>
<reference key="1">
    <citation type="journal article" date="2008" name="Antimicrob. Agents Chemother.">
        <title>Mutated response regulator graR is responsible for phenotypic conversion of Staphylococcus aureus from heterogeneous vancomycin-intermediate resistance to vancomycin-intermediate resistance.</title>
        <authorList>
            <person name="Neoh H.-M."/>
            <person name="Cui L."/>
            <person name="Yuzawa H."/>
            <person name="Takeuchi F."/>
            <person name="Matsuo M."/>
            <person name="Hiramatsu K."/>
        </authorList>
    </citation>
    <scope>NUCLEOTIDE SEQUENCE [LARGE SCALE GENOMIC DNA]</scope>
    <source>
        <strain>Mu3 / ATCC 700698</strain>
    </source>
</reference>
<accession>A7X0D6</accession>
<gene>
    <name evidence="1" type="primary">dltA</name>
    <name type="ordered locus">SAHV_0927</name>
</gene>
<proteinExistence type="inferred from homology"/>
<name>DLTA_STAA1</name>
<comment type="function">
    <text evidence="1">Catalyzes the first step in the D-alanylation of lipoteichoic acid (LTA), the activation of D-alanine and its transfer onto the D-alanyl carrier protein (Dcp) DltC. In an ATP-dependent two-step reaction, forms a high energy D-alanyl-AMP intermediate, followed by transfer of the D-alanyl residue as a thiol ester to the phosphopantheinyl prosthetic group of the Dcp. D-alanylation of LTA plays an important role in modulating the properties of the cell wall in Gram-positive bacteria, influencing the net charge of the cell wall.</text>
</comment>
<comment type="catalytic activity">
    <reaction evidence="1">
        <text>holo-[D-alanyl-carrier protein] + D-alanine + ATP = D-alanyl-[D-alanyl-carrier protein] + AMP + diphosphate</text>
        <dbReference type="Rhea" id="RHEA:55132"/>
        <dbReference type="Rhea" id="RHEA-COMP:14102"/>
        <dbReference type="Rhea" id="RHEA-COMP:14103"/>
        <dbReference type="ChEBI" id="CHEBI:30616"/>
        <dbReference type="ChEBI" id="CHEBI:33019"/>
        <dbReference type="ChEBI" id="CHEBI:57416"/>
        <dbReference type="ChEBI" id="CHEBI:64479"/>
        <dbReference type="ChEBI" id="CHEBI:138620"/>
        <dbReference type="ChEBI" id="CHEBI:456215"/>
        <dbReference type="EC" id="6.2.1.54"/>
    </reaction>
</comment>
<comment type="pathway">
    <text evidence="1">Cell wall biogenesis; lipoteichoic acid biosynthesis.</text>
</comment>
<comment type="subcellular location">
    <subcellularLocation>
        <location evidence="1">Cytoplasm</location>
    </subcellularLocation>
</comment>
<comment type="similarity">
    <text evidence="1">Belongs to the ATP-dependent AMP-binding enzyme family. DltA subfamily.</text>
</comment>